<evidence type="ECO:0000250" key="1"/>
<evidence type="ECO:0000255" key="2">
    <source>
        <dbReference type="PROSITE-ProRule" id="PRU01059"/>
    </source>
</evidence>
<evidence type="ECO:0000269" key="3">
    <source>
    </source>
</evidence>
<sequence length="469" mass="51849">MVISMEMKNVNVGLFGHIDHGKTQLAKQLTEIASTSALDKPKESQKRGITIDLGFSSFTLDRYRITLVDAPGHSELIRTAIGAGNIIDAALLVVDAKEGPKTQTGEHLLVLDLLNIPTIVVINKIDIANDEEIKRTEMFMKQILNSTINLKNSKIIKISAKTGEGIGELKKELKNLLDSLDIKRDINSYLKMPIDHAFKIKGVGTVVTGTIHKGKVEVGDNLRILPINHEVKVKSIQCFKQDVSIAYAGDRVGMALMGVEPESLFRGCILTSEDTKLKVVDKFIAKVKILELFKYNLAPKMKVHINIGLLTVPATIIPYKIEKINDKEEPIILEEIKGGDSCYCIFKLEERVVVDEGDKILIMRLDLPPTTLRICGFGEVIDFGEVEVKKIVVKEGKVVKKKDKIYIEGLASSKTAGEKLIGGKVYIPDKNIWGVIKGTFGTKGALIAEFDEEVNGGEKVVLKRVRKWG</sequence>
<reference key="1">
    <citation type="journal article" date="1996" name="Science">
        <title>Complete genome sequence of the methanogenic archaeon, Methanococcus jannaschii.</title>
        <authorList>
            <person name="Bult C.J."/>
            <person name="White O."/>
            <person name="Olsen G.J."/>
            <person name="Zhou L."/>
            <person name="Fleischmann R.D."/>
            <person name="Sutton G.G."/>
            <person name="Blake J.A."/>
            <person name="FitzGerald L.M."/>
            <person name="Clayton R.A."/>
            <person name="Gocayne J.D."/>
            <person name="Kerlavage A.R."/>
            <person name="Dougherty B.A."/>
            <person name="Tomb J.-F."/>
            <person name="Adams M.D."/>
            <person name="Reich C.I."/>
            <person name="Overbeek R."/>
            <person name="Kirkness E.F."/>
            <person name="Weinstock K.G."/>
            <person name="Merrick J.M."/>
            <person name="Glodek A."/>
            <person name="Scott J.L."/>
            <person name="Geoghagen N.S.M."/>
            <person name="Weidman J.F."/>
            <person name="Fuhrmann J.L."/>
            <person name="Nguyen D."/>
            <person name="Utterback T.R."/>
            <person name="Kelley J.M."/>
            <person name="Peterson J.D."/>
            <person name="Sadow P.W."/>
            <person name="Hanna M.C."/>
            <person name="Cotton M.D."/>
            <person name="Roberts K.M."/>
            <person name="Hurst M.A."/>
            <person name="Kaine B.P."/>
            <person name="Borodovsky M."/>
            <person name="Klenk H.-P."/>
            <person name="Fraser C.M."/>
            <person name="Smith H.O."/>
            <person name="Woese C.R."/>
            <person name="Venter J.C."/>
        </authorList>
    </citation>
    <scope>NUCLEOTIDE SEQUENCE [LARGE SCALE GENOMIC DNA]</scope>
    <source>
        <strain>ATCC 43067 / DSM 2661 / JAL-1 / JCM 10045 / NBRC 100440</strain>
    </source>
</reference>
<reference key="2">
    <citation type="journal article" date="2000" name="J. Mol. Biol.">
        <title>Identification and characterisation of the selenocysteine-specific translation factor SelB from the archaeon Methanococcus jannaschii.</title>
        <authorList>
            <person name="Rother M."/>
            <person name="Wilting R."/>
            <person name="Commans S."/>
            <person name="Boeck A."/>
        </authorList>
    </citation>
    <scope>FUNCTION</scope>
</reference>
<gene>
    <name type="primary">selB</name>
    <name type="ordered locus">MJ0495</name>
</gene>
<dbReference type="EMBL" id="L77117">
    <property type="protein sequence ID" value="AAB98485.1"/>
    <property type="molecule type" value="Genomic_DNA"/>
</dbReference>
<dbReference type="PIR" id="G64361">
    <property type="entry name" value="G64361"/>
</dbReference>
<dbReference type="SMR" id="Q57918"/>
<dbReference type="FunCoup" id="Q57918">
    <property type="interactions" value="48"/>
</dbReference>
<dbReference type="STRING" id="243232.MJ_0495"/>
<dbReference type="PaxDb" id="243232-MJ_0495"/>
<dbReference type="EnsemblBacteria" id="AAB98485">
    <property type="protein sequence ID" value="AAB98485"/>
    <property type="gene ID" value="MJ_0495"/>
</dbReference>
<dbReference type="KEGG" id="mja:MJ_0495"/>
<dbReference type="eggNOG" id="arCOG01564">
    <property type="taxonomic scope" value="Archaea"/>
</dbReference>
<dbReference type="HOGENOM" id="CLU_019148_1_0_2"/>
<dbReference type="InParanoid" id="Q57918"/>
<dbReference type="PhylomeDB" id="Q57918"/>
<dbReference type="Proteomes" id="UP000000805">
    <property type="component" value="Chromosome"/>
</dbReference>
<dbReference type="GO" id="GO:0005737">
    <property type="term" value="C:cytoplasm"/>
    <property type="evidence" value="ECO:0007669"/>
    <property type="project" value="UniProtKB-SubCell"/>
</dbReference>
<dbReference type="GO" id="GO:0005525">
    <property type="term" value="F:GTP binding"/>
    <property type="evidence" value="ECO:0007669"/>
    <property type="project" value="UniProtKB-KW"/>
</dbReference>
<dbReference type="GO" id="GO:0003924">
    <property type="term" value="F:GTPase activity"/>
    <property type="evidence" value="ECO:0007669"/>
    <property type="project" value="InterPro"/>
</dbReference>
<dbReference type="GO" id="GO:0003723">
    <property type="term" value="F:RNA binding"/>
    <property type="evidence" value="ECO:0007669"/>
    <property type="project" value="InterPro"/>
</dbReference>
<dbReference type="GO" id="GO:0003746">
    <property type="term" value="F:translation elongation factor activity"/>
    <property type="evidence" value="ECO:0000318"/>
    <property type="project" value="GO_Central"/>
</dbReference>
<dbReference type="GO" id="GO:0001514">
    <property type="term" value="P:selenocysteine incorporation"/>
    <property type="evidence" value="ECO:0000318"/>
    <property type="project" value="GO_Central"/>
</dbReference>
<dbReference type="CDD" id="cd04094">
    <property type="entry name" value="eSelB_III"/>
    <property type="match status" value="1"/>
</dbReference>
<dbReference type="CDD" id="cd01889">
    <property type="entry name" value="SelB_euk"/>
    <property type="match status" value="1"/>
</dbReference>
<dbReference type="CDD" id="cd03696">
    <property type="entry name" value="SelB_II"/>
    <property type="match status" value="1"/>
</dbReference>
<dbReference type="FunFam" id="2.40.30.10:FF:000290">
    <property type="entry name" value="Selenocysteine-specific translation elongation factor"/>
    <property type="match status" value="1"/>
</dbReference>
<dbReference type="FunFam" id="3.40.50.300:FF:005693">
    <property type="entry name" value="Selenocysteine-specific translation elongation factor"/>
    <property type="match status" value="1"/>
</dbReference>
<dbReference type="Gene3D" id="3.40.50.300">
    <property type="entry name" value="P-loop containing nucleotide triphosphate hydrolases"/>
    <property type="match status" value="1"/>
</dbReference>
<dbReference type="Gene3D" id="2.40.10.190">
    <property type="entry name" value="translation elongation factor selb, chain A, domain 4"/>
    <property type="match status" value="1"/>
</dbReference>
<dbReference type="Gene3D" id="2.40.30.10">
    <property type="entry name" value="Translation factors"/>
    <property type="match status" value="2"/>
</dbReference>
<dbReference type="InterPro" id="IPR050055">
    <property type="entry name" value="EF-Tu_GTPase"/>
</dbReference>
<dbReference type="InterPro" id="IPR004161">
    <property type="entry name" value="EFTu-like_2"/>
</dbReference>
<dbReference type="InterPro" id="IPR027417">
    <property type="entry name" value="P-loop_NTPase"/>
</dbReference>
<dbReference type="InterPro" id="IPR038661">
    <property type="entry name" value="Ribosomal_eL33_sf"/>
</dbReference>
<dbReference type="InterPro" id="IPR048956">
    <property type="entry name" value="SelB_III_arc"/>
</dbReference>
<dbReference type="InterPro" id="IPR005225">
    <property type="entry name" value="Small_GTP-bd"/>
</dbReference>
<dbReference type="InterPro" id="IPR000795">
    <property type="entry name" value="T_Tr_GTP-bd_dom"/>
</dbReference>
<dbReference type="InterPro" id="IPR009000">
    <property type="entry name" value="Transl_B-barrel_sf"/>
</dbReference>
<dbReference type="InterPro" id="IPR009001">
    <property type="entry name" value="Transl_elong_EF1A/Init_IF2_C"/>
</dbReference>
<dbReference type="InterPro" id="IPR004535">
    <property type="entry name" value="Transl_elong_SelB"/>
</dbReference>
<dbReference type="NCBIfam" id="TIGR00475">
    <property type="entry name" value="selB"/>
    <property type="match status" value="1"/>
</dbReference>
<dbReference type="NCBIfam" id="TIGR00231">
    <property type="entry name" value="small_GTP"/>
    <property type="match status" value="1"/>
</dbReference>
<dbReference type="PANTHER" id="PTHR43721">
    <property type="entry name" value="ELONGATION FACTOR TU-RELATED"/>
    <property type="match status" value="1"/>
</dbReference>
<dbReference type="PANTHER" id="PTHR43721:SF11">
    <property type="entry name" value="SELENOCYSTEINE-SPECIFIC ELONGATION FACTOR"/>
    <property type="match status" value="1"/>
</dbReference>
<dbReference type="Pfam" id="PF21440">
    <property type="entry name" value="aSelB_III"/>
    <property type="match status" value="1"/>
</dbReference>
<dbReference type="Pfam" id="PF00009">
    <property type="entry name" value="GTP_EFTU"/>
    <property type="match status" value="1"/>
</dbReference>
<dbReference type="Pfam" id="PF03144">
    <property type="entry name" value="GTP_EFTU_D2"/>
    <property type="match status" value="1"/>
</dbReference>
<dbReference type="PRINTS" id="PR00315">
    <property type="entry name" value="ELONGATNFCT"/>
</dbReference>
<dbReference type="SUPFAM" id="SSF50465">
    <property type="entry name" value="EF-Tu/eEF-1alpha/eIF2-gamma C-terminal domain"/>
    <property type="match status" value="1"/>
</dbReference>
<dbReference type="SUPFAM" id="SSF52540">
    <property type="entry name" value="P-loop containing nucleoside triphosphate hydrolases"/>
    <property type="match status" value="1"/>
</dbReference>
<dbReference type="SUPFAM" id="SSF50447">
    <property type="entry name" value="Translation proteins"/>
    <property type="match status" value="2"/>
</dbReference>
<dbReference type="PROSITE" id="PS51722">
    <property type="entry name" value="G_TR_2"/>
    <property type="match status" value="1"/>
</dbReference>
<proteinExistence type="inferred from homology"/>
<feature type="chain" id="PRO_0000091477" description="Selenocysteine-specific elongation factor">
    <location>
        <begin position="1"/>
        <end position="469"/>
    </location>
</feature>
<feature type="domain" description="tr-type G" evidence="2">
    <location>
        <begin position="7"/>
        <end position="181"/>
    </location>
</feature>
<feature type="region of interest" description="G1" evidence="2">
    <location>
        <begin position="16"/>
        <end position="23"/>
    </location>
</feature>
<feature type="region of interest" description="G2" evidence="2">
    <location>
        <begin position="48"/>
        <end position="52"/>
    </location>
</feature>
<feature type="region of interest" description="G3" evidence="2">
    <location>
        <begin position="69"/>
        <end position="72"/>
    </location>
</feature>
<feature type="region of interest" description="G4" evidence="2">
    <location>
        <begin position="123"/>
        <end position="126"/>
    </location>
</feature>
<feature type="region of interest" description="G5" evidence="2">
    <location>
        <begin position="159"/>
        <end position="161"/>
    </location>
</feature>
<feature type="binding site" evidence="1">
    <location>
        <begin position="16"/>
        <end position="23"/>
    </location>
    <ligand>
        <name>GTP</name>
        <dbReference type="ChEBI" id="CHEBI:37565"/>
    </ligand>
</feature>
<feature type="binding site" evidence="1">
    <location>
        <begin position="69"/>
        <end position="73"/>
    </location>
    <ligand>
        <name>GTP</name>
        <dbReference type="ChEBI" id="CHEBI:37565"/>
    </ligand>
</feature>
<feature type="binding site" evidence="1">
    <location>
        <begin position="123"/>
        <end position="126"/>
    </location>
    <ligand>
        <name>GTP</name>
        <dbReference type="ChEBI" id="CHEBI:37565"/>
    </ligand>
</feature>
<comment type="function">
    <text evidence="3">Translation factor necessary for the incorporation of selenocysteine into proteins. It probably replaces EF-Tu for the insertion of selenocysteine directed by the UGA codon. SelB binds GTP and GDP.</text>
</comment>
<comment type="subcellular location">
    <subcellularLocation>
        <location>Cytoplasm</location>
    </subcellularLocation>
</comment>
<comment type="similarity">
    <text evidence="2">Belongs to the TRAFAC class translation factor GTPase superfamily. Classic translation factor GTPase family. SelB subfamily.</text>
</comment>
<protein>
    <recommendedName>
        <fullName>Selenocysteine-specific elongation factor</fullName>
    </recommendedName>
    <alternativeName>
        <fullName>SelB translation factor</fullName>
    </alternativeName>
</protein>
<keyword id="KW-0963">Cytoplasm</keyword>
<keyword id="KW-0342">GTP-binding</keyword>
<keyword id="KW-0547">Nucleotide-binding</keyword>
<keyword id="KW-0648">Protein biosynthesis</keyword>
<keyword id="KW-1185">Reference proteome</keyword>
<organism>
    <name type="scientific">Methanocaldococcus jannaschii (strain ATCC 43067 / DSM 2661 / JAL-1 / JCM 10045 / NBRC 100440)</name>
    <name type="common">Methanococcus jannaschii</name>
    <dbReference type="NCBI Taxonomy" id="243232"/>
    <lineage>
        <taxon>Archaea</taxon>
        <taxon>Methanobacteriati</taxon>
        <taxon>Methanobacteriota</taxon>
        <taxon>Methanomada group</taxon>
        <taxon>Methanococci</taxon>
        <taxon>Methanococcales</taxon>
        <taxon>Methanocaldococcaceae</taxon>
        <taxon>Methanocaldococcus</taxon>
    </lineage>
</organism>
<accession>Q57918</accession>
<name>SELB_METJA</name>